<accession>A0PRD3</accession>
<keyword id="KW-0028">Amino-acid biosynthesis</keyword>
<keyword id="KW-0057">Aromatic amino acid biosynthesis</keyword>
<keyword id="KW-0963">Cytoplasm</keyword>
<keyword id="KW-0808">Transferase</keyword>
<dbReference type="EC" id="2.5.1.19" evidence="1"/>
<dbReference type="EMBL" id="CP000325">
    <property type="protein sequence ID" value="ABL04902.1"/>
    <property type="molecule type" value="Genomic_DNA"/>
</dbReference>
<dbReference type="SMR" id="A0PRD3"/>
<dbReference type="KEGG" id="mul:MUL_2560"/>
<dbReference type="eggNOG" id="COG0128">
    <property type="taxonomic scope" value="Bacteria"/>
</dbReference>
<dbReference type="HOGENOM" id="CLU_024321_0_0_11"/>
<dbReference type="UniPathway" id="UPA00053">
    <property type="reaction ID" value="UER00089"/>
</dbReference>
<dbReference type="Proteomes" id="UP000000765">
    <property type="component" value="Chromosome"/>
</dbReference>
<dbReference type="GO" id="GO:0005737">
    <property type="term" value="C:cytoplasm"/>
    <property type="evidence" value="ECO:0007669"/>
    <property type="project" value="UniProtKB-SubCell"/>
</dbReference>
<dbReference type="GO" id="GO:0003866">
    <property type="term" value="F:3-phosphoshikimate 1-carboxyvinyltransferase activity"/>
    <property type="evidence" value="ECO:0007669"/>
    <property type="project" value="UniProtKB-UniRule"/>
</dbReference>
<dbReference type="GO" id="GO:0008652">
    <property type="term" value="P:amino acid biosynthetic process"/>
    <property type="evidence" value="ECO:0007669"/>
    <property type="project" value="UniProtKB-KW"/>
</dbReference>
<dbReference type="GO" id="GO:0009073">
    <property type="term" value="P:aromatic amino acid family biosynthetic process"/>
    <property type="evidence" value="ECO:0007669"/>
    <property type="project" value="UniProtKB-KW"/>
</dbReference>
<dbReference type="GO" id="GO:0009423">
    <property type="term" value="P:chorismate biosynthetic process"/>
    <property type="evidence" value="ECO:0007669"/>
    <property type="project" value="UniProtKB-UniRule"/>
</dbReference>
<dbReference type="CDD" id="cd01556">
    <property type="entry name" value="EPSP_synthase"/>
    <property type="match status" value="1"/>
</dbReference>
<dbReference type="FunFam" id="3.65.10.10:FF:000010">
    <property type="entry name" value="3-phosphoshikimate 1-carboxyvinyltransferase"/>
    <property type="match status" value="1"/>
</dbReference>
<dbReference type="FunFam" id="3.65.10.10:FF:000011">
    <property type="entry name" value="3-phosphoshikimate 1-carboxyvinyltransferase"/>
    <property type="match status" value="1"/>
</dbReference>
<dbReference type="Gene3D" id="3.65.10.10">
    <property type="entry name" value="Enolpyruvate transferase domain"/>
    <property type="match status" value="2"/>
</dbReference>
<dbReference type="HAMAP" id="MF_00210">
    <property type="entry name" value="EPSP_synth"/>
    <property type="match status" value="1"/>
</dbReference>
<dbReference type="InterPro" id="IPR001986">
    <property type="entry name" value="Enolpyruvate_Tfrase_dom"/>
</dbReference>
<dbReference type="InterPro" id="IPR036968">
    <property type="entry name" value="Enolpyruvate_Tfrase_sf"/>
</dbReference>
<dbReference type="InterPro" id="IPR006264">
    <property type="entry name" value="EPSP_synthase"/>
</dbReference>
<dbReference type="InterPro" id="IPR023193">
    <property type="entry name" value="EPSP_synthase_CS"/>
</dbReference>
<dbReference type="InterPro" id="IPR013792">
    <property type="entry name" value="RNA3'P_cycl/enolpyr_Trfase_a/b"/>
</dbReference>
<dbReference type="NCBIfam" id="TIGR01356">
    <property type="entry name" value="aroA"/>
    <property type="match status" value="1"/>
</dbReference>
<dbReference type="PANTHER" id="PTHR21090">
    <property type="entry name" value="AROM/DEHYDROQUINATE SYNTHASE"/>
    <property type="match status" value="1"/>
</dbReference>
<dbReference type="PANTHER" id="PTHR21090:SF5">
    <property type="entry name" value="PENTAFUNCTIONAL AROM POLYPEPTIDE"/>
    <property type="match status" value="1"/>
</dbReference>
<dbReference type="Pfam" id="PF00275">
    <property type="entry name" value="EPSP_synthase"/>
    <property type="match status" value="1"/>
</dbReference>
<dbReference type="PIRSF" id="PIRSF000505">
    <property type="entry name" value="EPSPS"/>
    <property type="match status" value="1"/>
</dbReference>
<dbReference type="SUPFAM" id="SSF55205">
    <property type="entry name" value="EPT/RTPC-like"/>
    <property type="match status" value="1"/>
</dbReference>
<dbReference type="PROSITE" id="PS00104">
    <property type="entry name" value="EPSP_SYNTHASE_1"/>
    <property type="match status" value="1"/>
</dbReference>
<dbReference type="PROSITE" id="PS00885">
    <property type="entry name" value="EPSP_SYNTHASE_2"/>
    <property type="match status" value="1"/>
</dbReference>
<comment type="function">
    <text evidence="1">Catalyzes the transfer of the enolpyruvyl moiety of phosphoenolpyruvate (PEP) to the 5-hydroxyl of shikimate-3-phosphate (S3P) to produce enolpyruvyl shikimate-3-phosphate and inorganic phosphate.</text>
</comment>
<comment type="catalytic activity">
    <reaction evidence="1">
        <text>3-phosphoshikimate + phosphoenolpyruvate = 5-O-(1-carboxyvinyl)-3-phosphoshikimate + phosphate</text>
        <dbReference type="Rhea" id="RHEA:21256"/>
        <dbReference type="ChEBI" id="CHEBI:43474"/>
        <dbReference type="ChEBI" id="CHEBI:57701"/>
        <dbReference type="ChEBI" id="CHEBI:58702"/>
        <dbReference type="ChEBI" id="CHEBI:145989"/>
        <dbReference type="EC" id="2.5.1.19"/>
    </reaction>
    <physiologicalReaction direction="left-to-right" evidence="1">
        <dbReference type="Rhea" id="RHEA:21257"/>
    </physiologicalReaction>
</comment>
<comment type="pathway">
    <text evidence="1">Metabolic intermediate biosynthesis; chorismate biosynthesis; chorismate from D-erythrose 4-phosphate and phosphoenolpyruvate: step 6/7.</text>
</comment>
<comment type="subunit">
    <text evidence="1">Monomer.</text>
</comment>
<comment type="subcellular location">
    <subcellularLocation>
        <location evidence="1">Cytoplasm</location>
    </subcellularLocation>
</comment>
<comment type="similarity">
    <text evidence="1">Belongs to the EPSP synthase family.</text>
</comment>
<feature type="chain" id="PRO_1000099728" description="3-phosphoshikimate 1-carboxyvinyltransferase">
    <location>
        <begin position="1"/>
        <end position="431"/>
    </location>
</feature>
<feature type="active site" description="Proton acceptor" evidence="1">
    <location>
        <position position="314"/>
    </location>
</feature>
<feature type="binding site" evidence="1">
    <location>
        <position position="26"/>
    </location>
    <ligand>
        <name>3-phosphoshikimate</name>
        <dbReference type="ChEBI" id="CHEBI:145989"/>
    </ligand>
</feature>
<feature type="binding site" evidence="1">
    <location>
        <position position="26"/>
    </location>
    <ligand>
        <name>phosphoenolpyruvate</name>
        <dbReference type="ChEBI" id="CHEBI:58702"/>
    </ligand>
</feature>
<feature type="binding site" evidence="1">
    <location>
        <position position="27"/>
    </location>
    <ligand>
        <name>3-phosphoshikimate</name>
        <dbReference type="ChEBI" id="CHEBI:145989"/>
    </ligand>
</feature>
<feature type="binding site" evidence="1">
    <location>
        <position position="31"/>
    </location>
    <ligand>
        <name>3-phosphoshikimate</name>
        <dbReference type="ChEBI" id="CHEBI:145989"/>
    </ligand>
</feature>
<feature type="binding site" evidence="1">
    <location>
        <position position="99"/>
    </location>
    <ligand>
        <name>phosphoenolpyruvate</name>
        <dbReference type="ChEBI" id="CHEBI:58702"/>
    </ligand>
</feature>
<feature type="binding site" evidence="1">
    <location>
        <position position="127"/>
    </location>
    <ligand>
        <name>phosphoenolpyruvate</name>
        <dbReference type="ChEBI" id="CHEBI:58702"/>
    </ligand>
</feature>
<feature type="binding site" evidence="1">
    <location>
        <position position="170"/>
    </location>
    <ligand>
        <name>3-phosphoshikimate</name>
        <dbReference type="ChEBI" id="CHEBI:145989"/>
    </ligand>
</feature>
<feature type="binding site" evidence="1">
    <location>
        <position position="171"/>
    </location>
    <ligand>
        <name>3-phosphoshikimate</name>
        <dbReference type="ChEBI" id="CHEBI:145989"/>
    </ligand>
</feature>
<feature type="binding site" evidence="1">
    <location>
        <position position="172"/>
    </location>
    <ligand>
        <name>3-phosphoshikimate</name>
        <dbReference type="ChEBI" id="CHEBI:145989"/>
    </ligand>
</feature>
<feature type="binding site" evidence="1">
    <location>
        <position position="172"/>
    </location>
    <ligand>
        <name>phosphoenolpyruvate</name>
        <dbReference type="ChEBI" id="CHEBI:58702"/>
    </ligand>
</feature>
<feature type="binding site" evidence="1">
    <location>
        <position position="199"/>
    </location>
    <ligand>
        <name>3-phosphoshikimate</name>
        <dbReference type="ChEBI" id="CHEBI:145989"/>
    </ligand>
</feature>
<feature type="binding site" evidence="1">
    <location>
        <position position="314"/>
    </location>
    <ligand>
        <name>3-phosphoshikimate</name>
        <dbReference type="ChEBI" id="CHEBI:145989"/>
    </ligand>
</feature>
<feature type="binding site" evidence="1">
    <location>
        <position position="343"/>
    </location>
    <ligand>
        <name>3-phosphoshikimate</name>
        <dbReference type="ChEBI" id="CHEBI:145989"/>
    </ligand>
</feature>
<feature type="binding site" evidence="1">
    <location>
        <position position="347"/>
    </location>
    <ligand>
        <name>phosphoenolpyruvate</name>
        <dbReference type="ChEBI" id="CHEBI:58702"/>
    </ligand>
</feature>
<feature type="binding site" evidence="1">
    <location>
        <position position="388"/>
    </location>
    <ligand>
        <name>phosphoenolpyruvate</name>
        <dbReference type="ChEBI" id="CHEBI:58702"/>
    </ligand>
</feature>
<feature type="binding site" evidence="1">
    <location>
        <position position="413"/>
    </location>
    <ligand>
        <name>phosphoenolpyruvate</name>
        <dbReference type="ChEBI" id="CHEBI:58702"/>
    </ligand>
</feature>
<protein>
    <recommendedName>
        <fullName evidence="1">3-phosphoshikimate 1-carboxyvinyltransferase</fullName>
        <ecNumber evidence="1">2.5.1.19</ecNumber>
    </recommendedName>
    <alternativeName>
        <fullName evidence="1">5-enolpyruvylshikimate-3-phosphate synthase</fullName>
        <shortName evidence="1">EPSP synthase</shortName>
        <shortName evidence="1">EPSPS</shortName>
    </alternativeName>
</protein>
<organism>
    <name type="scientific">Mycobacterium ulcerans (strain Agy99)</name>
    <dbReference type="NCBI Taxonomy" id="362242"/>
    <lineage>
        <taxon>Bacteria</taxon>
        <taxon>Bacillati</taxon>
        <taxon>Actinomycetota</taxon>
        <taxon>Actinomycetes</taxon>
        <taxon>Mycobacteriales</taxon>
        <taxon>Mycobacteriaceae</taxon>
        <taxon>Mycobacterium</taxon>
        <taxon>Mycobacterium ulcerans group</taxon>
    </lineage>
</organism>
<reference key="1">
    <citation type="journal article" date="2007" name="Genome Res.">
        <title>Reductive evolution and niche adaptation inferred from the genome of Mycobacterium ulcerans, the causative agent of Buruli ulcer.</title>
        <authorList>
            <person name="Stinear T.P."/>
            <person name="Seemann T."/>
            <person name="Pidot S."/>
            <person name="Frigui W."/>
            <person name="Reysset G."/>
            <person name="Garnier T."/>
            <person name="Meurice G."/>
            <person name="Simon D."/>
            <person name="Bouchier C."/>
            <person name="Ma L."/>
            <person name="Tichit M."/>
            <person name="Porter J.L."/>
            <person name="Ryan J."/>
            <person name="Johnson P.D.R."/>
            <person name="Davies J.K."/>
            <person name="Jenkin G.A."/>
            <person name="Small P.L.C."/>
            <person name="Jones L.M."/>
            <person name="Tekaia F."/>
            <person name="Laval F."/>
            <person name="Daffe M."/>
            <person name="Parkhill J."/>
            <person name="Cole S.T."/>
        </authorList>
    </citation>
    <scope>NUCLEOTIDE SEQUENCE [LARGE SCALE GENOMIC DNA]</scope>
    <source>
        <strain>Agy99</strain>
    </source>
</reference>
<sequence length="431" mass="44593">MSSIEPWPAPFAPTPVHATVTVPGSKSQTNRTLVLAALAAAQGQGSSTITGALRSRDTDLMIEALQTLGLRVDGTGSELTVSGRIRPCPEARVDCGLAGTVLRFAPPLAALSAAPITFDGDEQARARPIAPLLDALRGLGVPVDGAGLPFRVQGTGSVAGGTVAIDASASSQFVSGLLLSGASFTDGLTVQHTGSELPSAPHIAMTVQMLRQAGVDVDDSIPNRWLVRPGALRPRHWDAEPDLTNAVAFLAAAVVTGGTVTITGWPADSVQPAKNILDILQTLNSTVRHIDSCLQVQGPQSYRGFDVDLRDVGELTPSVAALAALASPGSVSRLAGIAHLRGHETDRLAALSTEINRLGGNCEQTSDGLVITATPLRPGSWRAYADHRMAMAGAIVGLRVAGVEVDDIGATSKTLPEFPQLWTEMVEGSSG</sequence>
<evidence type="ECO:0000255" key="1">
    <source>
        <dbReference type="HAMAP-Rule" id="MF_00210"/>
    </source>
</evidence>
<name>AROA_MYCUA</name>
<proteinExistence type="inferred from homology"/>
<gene>
    <name evidence="1" type="primary">aroA</name>
    <name type="ordered locus">MUL_2560</name>
</gene>